<organism>
    <name type="scientific">Burkholderia orbicola (strain AU 1054)</name>
    <dbReference type="NCBI Taxonomy" id="331271"/>
    <lineage>
        <taxon>Bacteria</taxon>
        <taxon>Pseudomonadati</taxon>
        <taxon>Pseudomonadota</taxon>
        <taxon>Betaproteobacteria</taxon>
        <taxon>Burkholderiales</taxon>
        <taxon>Burkholderiaceae</taxon>
        <taxon>Burkholderia</taxon>
        <taxon>Burkholderia cepacia complex</taxon>
        <taxon>Burkholderia orbicola</taxon>
    </lineage>
</organism>
<reference key="1">
    <citation type="submission" date="2006-05" db="EMBL/GenBank/DDBJ databases">
        <title>Complete sequence of chromosome 2 of Burkholderia cenocepacia AU 1054.</title>
        <authorList>
            <consortium name="US DOE Joint Genome Institute"/>
            <person name="Copeland A."/>
            <person name="Lucas S."/>
            <person name="Lapidus A."/>
            <person name="Barry K."/>
            <person name="Detter J.C."/>
            <person name="Glavina del Rio T."/>
            <person name="Hammon N."/>
            <person name="Israni S."/>
            <person name="Dalin E."/>
            <person name="Tice H."/>
            <person name="Pitluck S."/>
            <person name="Chain P."/>
            <person name="Malfatti S."/>
            <person name="Shin M."/>
            <person name="Vergez L."/>
            <person name="Schmutz J."/>
            <person name="Larimer F."/>
            <person name="Land M."/>
            <person name="Hauser L."/>
            <person name="Kyrpides N."/>
            <person name="Lykidis A."/>
            <person name="LiPuma J.J."/>
            <person name="Konstantinidis K."/>
            <person name="Tiedje J.M."/>
            <person name="Richardson P."/>
        </authorList>
    </citation>
    <scope>NUCLEOTIDE SEQUENCE [LARGE SCALE GENOMIC DNA]</scope>
    <source>
        <strain>AU 1054</strain>
    </source>
</reference>
<comment type="function">
    <text evidence="1">Part of the ABC transporter complex RbsABC involved in ribose import. Responsible for energy coupling to the transport system.</text>
</comment>
<comment type="catalytic activity">
    <reaction evidence="1">
        <text>D-ribose(out) + ATP + H2O = D-ribose(in) + ADP + phosphate + H(+)</text>
        <dbReference type="Rhea" id="RHEA:29903"/>
        <dbReference type="ChEBI" id="CHEBI:15377"/>
        <dbReference type="ChEBI" id="CHEBI:15378"/>
        <dbReference type="ChEBI" id="CHEBI:30616"/>
        <dbReference type="ChEBI" id="CHEBI:43474"/>
        <dbReference type="ChEBI" id="CHEBI:47013"/>
        <dbReference type="ChEBI" id="CHEBI:456216"/>
        <dbReference type="EC" id="7.5.2.7"/>
    </reaction>
</comment>
<comment type="subunit">
    <text evidence="1">The complex is composed of an ATP-binding protein (RbsA), two transmembrane proteins (RbsC) and a solute-binding protein (RbsB).</text>
</comment>
<comment type="subcellular location">
    <subcellularLocation>
        <location evidence="1">Cell inner membrane</location>
        <topology evidence="1">Peripheral membrane protein</topology>
    </subcellularLocation>
</comment>
<comment type="similarity">
    <text evidence="1">Belongs to the ABC transporter superfamily. Ribose importer (TC 3.A.1.2.1) family.</text>
</comment>
<accession>Q1BPL3</accession>
<protein>
    <recommendedName>
        <fullName evidence="1">Ribose import ATP-binding protein RbsA 2</fullName>
        <ecNumber evidence="1">7.5.2.7</ecNumber>
    </recommendedName>
</protein>
<dbReference type="EC" id="7.5.2.7" evidence="1"/>
<dbReference type="EMBL" id="CP000379">
    <property type="protein sequence ID" value="ABF78442.1"/>
    <property type="molecule type" value="Genomic_DNA"/>
</dbReference>
<dbReference type="SMR" id="Q1BPL3"/>
<dbReference type="HOGENOM" id="CLU_000604_92_3_4"/>
<dbReference type="GO" id="GO:0005886">
    <property type="term" value="C:plasma membrane"/>
    <property type="evidence" value="ECO:0007669"/>
    <property type="project" value="UniProtKB-SubCell"/>
</dbReference>
<dbReference type="GO" id="GO:0015611">
    <property type="term" value="F:ABC-type D-ribose transporter activity"/>
    <property type="evidence" value="ECO:0007669"/>
    <property type="project" value="UniProtKB-EC"/>
</dbReference>
<dbReference type="GO" id="GO:0005524">
    <property type="term" value="F:ATP binding"/>
    <property type="evidence" value="ECO:0007669"/>
    <property type="project" value="UniProtKB-KW"/>
</dbReference>
<dbReference type="GO" id="GO:0016887">
    <property type="term" value="F:ATP hydrolysis activity"/>
    <property type="evidence" value="ECO:0007669"/>
    <property type="project" value="InterPro"/>
</dbReference>
<dbReference type="CDD" id="cd03216">
    <property type="entry name" value="ABC_Carb_Monos_I"/>
    <property type="match status" value="1"/>
</dbReference>
<dbReference type="CDD" id="cd03215">
    <property type="entry name" value="ABC_Carb_Monos_II"/>
    <property type="match status" value="1"/>
</dbReference>
<dbReference type="FunFam" id="3.40.50.300:FF:000127">
    <property type="entry name" value="Ribose import ATP-binding protein RbsA"/>
    <property type="match status" value="1"/>
</dbReference>
<dbReference type="Gene3D" id="3.40.50.300">
    <property type="entry name" value="P-loop containing nucleotide triphosphate hydrolases"/>
    <property type="match status" value="2"/>
</dbReference>
<dbReference type="InterPro" id="IPR003593">
    <property type="entry name" value="AAA+_ATPase"/>
</dbReference>
<dbReference type="InterPro" id="IPR050107">
    <property type="entry name" value="ABC_carbohydrate_import_ATPase"/>
</dbReference>
<dbReference type="InterPro" id="IPR003439">
    <property type="entry name" value="ABC_transporter-like_ATP-bd"/>
</dbReference>
<dbReference type="InterPro" id="IPR017871">
    <property type="entry name" value="ABC_transporter-like_CS"/>
</dbReference>
<dbReference type="InterPro" id="IPR027417">
    <property type="entry name" value="P-loop_NTPase"/>
</dbReference>
<dbReference type="PANTHER" id="PTHR43790">
    <property type="entry name" value="CARBOHYDRATE TRANSPORT ATP-BINDING PROTEIN MG119-RELATED"/>
    <property type="match status" value="1"/>
</dbReference>
<dbReference type="PANTHER" id="PTHR43790:SF3">
    <property type="entry name" value="D-ALLOSE IMPORT ATP-BINDING PROTEIN ALSA-RELATED"/>
    <property type="match status" value="1"/>
</dbReference>
<dbReference type="Pfam" id="PF00005">
    <property type="entry name" value="ABC_tran"/>
    <property type="match status" value="2"/>
</dbReference>
<dbReference type="SMART" id="SM00382">
    <property type="entry name" value="AAA"/>
    <property type="match status" value="2"/>
</dbReference>
<dbReference type="SUPFAM" id="SSF52540">
    <property type="entry name" value="P-loop containing nucleoside triphosphate hydrolases"/>
    <property type="match status" value="2"/>
</dbReference>
<dbReference type="PROSITE" id="PS00211">
    <property type="entry name" value="ABC_TRANSPORTER_1"/>
    <property type="match status" value="1"/>
</dbReference>
<dbReference type="PROSITE" id="PS50893">
    <property type="entry name" value="ABC_TRANSPORTER_2"/>
    <property type="match status" value="2"/>
</dbReference>
<dbReference type="PROSITE" id="PS51254">
    <property type="entry name" value="RBSA"/>
    <property type="match status" value="1"/>
</dbReference>
<name>RBSA2_BURO1</name>
<proteinExistence type="inferred from homology"/>
<sequence>MDTILRLSHITKSFPGVKALSDIDLEIARGEIHALLGENGAGKSTLMKILCGIHQPDAGTIEIDGAARHFADYHDAVAAGVGIVFQEFSLIPHLDAVDNLFLGRELRNRWGARDRKRMRAAAAAIFARLGVAIDLDAPIRTLSVAQQQFVEIGKALSLDARILILDEPTATLTPAEAEHLFAIMRELKRQGVAMIFISHHLDEIFVVCDRITVLRDGQYVATTEVARTDVEQLVRMMVGRRIESSFPPKPVLPADAPAVLEVDALQIERDGPVNRFALREGEILGFAGLVGSGRTETALAVIGATRAHRKELRVRGAAAKLADPADALRAGIGILPESRKTEGLVTSFSIRDNISLNNLGKYRSMRWLIDRRGEARTTHDVMRRVGVKAPSIHTEVATLSGGNQQKVVIARWLNHHTSVLIFDEPTRGIDVGAKAEIYGLMRELTARGYAIIMISSELPEIVGMCDRVAVFRQGRIEATLEGDEIDPDTVMTYATAGTRGATHEPA</sequence>
<gene>
    <name evidence="1" type="primary">rbsA2</name>
    <name type="ordered locus">Bcen_3548</name>
</gene>
<keyword id="KW-0067">ATP-binding</keyword>
<keyword id="KW-0997">Cell inner membrane</keyword>
<keyword id="KW-1003">Cell membrane</keyword>
<keyword id="KW-0472">Membrane</keyword>
<keyword id="KW-0547">Nucleotide-binding</keyword>
<keyword id="KW-0677">Repeat</keyword>
<keyword id="KW-0762">Sugar transport</keyword>
<keyword id="KW-1278">Translocase</keyword>
<keyword id="KW-0813">Transport</keyword>
<feature type="chain" id="PRO_0000261045" description="Ribose import ATP-binding protein RbsA 2">
    <location>
        <begin position="1"/>
        <end position="506"/>
    </location>
</feature>
<feature type="domain" description="ABC transporter 1" evidence="1">
    <location>
        <begin position="5"/>
        <end position="241"/>
    </location>
</feature>
<feature type="domain" description="ABC transporter 2" evidence="1">
    <location>
        <begin position="254"/>
        <end position="498"/>
    </location>
</feature>
<feature type="binding site" evidence="1">
    <location>
        <begin position="37"/>
        <end position="44"/>
    </location>
    <ligand>
        <name>ATP</name>
        <dbReference type="ChEBI" id="CHEBI:30616"/>
    </ligand>
</feature>
<evidence type="ECO:0000255" key="1">
    <source>
        <dbReference type="HAMAP-Rule" id="MF_01716"/>
    </source>
</evidence>